<dbReference type="EC" id="4.2.2.2"/>
<dbReference type="EMBL" id="S51475">
    <property type="protein sequence ID" value="AAC60422.1"/>
    <property type="molecule type" value="Genomic_DNA"/>
</dbReference>
<dbReference type="PIR" id="JC1313">
    <property type="entry name" value="JC1313"/>
</dbReference>
<dbReference type="RefSeq" id="WP_039492150.1">
    <property type="nucleotide sequence ID" value="NZ_CP034938.1"/>
</dbReference>
<dbReference type="SMR" id="P0C1C1"/>
<dbReference type="CAZy" id="PL1">
    <property type="family name" value="Polysaccharide Lyase Family 1"/>
</dbReference>
<dbReference type="GeneID" id="51391440"/>
<dbReference type="UniPathway" id="UPA00545">
    <property type="reaction ID" value="UER00824"/>
</dbReference>
<dbReference type="GO" id="GO:0005576">
    <property type="term" value="C:extracellular region"/>
    <property type="evidence" value="ECO:0007669"/>
    <property type="project" value="UniProtKB-SubCell"/>
</dbReference>
<dbReference type="GO" id="GO:0046872">
    <property type="term" value="F:metal ion binding"/>
    <property type="evidence" value="ECO:0007669"/>
    <property type="project" value="UniProtKB-KW"/>
</dbReference>
<dbReference type="GO" id="GO:0030570">
    <property type="term" value="F:pectate lyase activity"/>
    <property type="evidence" value="ECO:0007669"/>
    <property type="project" value="UniProtKB-EC"/>
</dbReference>
<dbReference type="GO" id="GO:0045490">
    <property type="term" value="P:pectin catabolic process"/>
    <property type="evidence" value="ECO:0007669"/>
    <property type="project" value="UniProtKB-UniPathway"/>
</dbReference>
<dbReference type="Gene3D" id="2.160.20.10">
    <property type="entry name" value="Single-stranded right-handed beta-helix, Pectin lyase-like"/>
    <property type="match status" value="1"/>
</dbReference>
<dbReference type="InterPro" id="IPR002022">
    <property type="entry name" value="Pec_lyase"/>
</dbReference>
<dbReference type="InterPro" id="IPR012334">
    <property type="entry name" value="Pectin_lyas_fold"/>
</dbReference>
<dbReference type="InterPro" id="IPR011050">
    <property type="entry name" value="Pectin_lyase_fold/virulence"/>
</dbReference>
<dbReference type="InterPro" id="IPR045032">
    <property type="entry name" value="PEL"/>
</dbReference>
<dbReference type="PANTHER" id="PTHR31683">
    <property type="entry name" value="PECTATE LYASE 18-RELATED"/>
    <property type="match status" value="1"/>
</dbReference>
<dbReference type="PANTHER" id="PTHR31683:SF18">
    <property type="entry name" value="PECTATE LYASE 21-RELATED"/>
    <property type="match status" value="1"/>
</dbReference>
<dbReference type="Pfam" id="PF00544">
    <property type="entry name" value="Pectate_lyase_4"/>
    <property type="match status" value="1"/>
</dbReference>
<dbReference type="SMART" id="SM00656">
    <property type="entry name" value="Amb_all"/>
    <property type="match status" value="1"/>
</dbReference>
<dbReference type="SUPFAM" id="SSF51126">
    <property type="entry name" value="Pectin lyase-like"/>
    <property type="match status" value="1"/>
</dbReference>
<feature type="signal peptide" evidence="1">
    <location>
        <begin position="1"/>
        <end position="22"/>
    </location>
</feature>
<feature type="chain" id="PRO_0000024850" description="Pectate lyase 2">
    <location>
        <begin position="23"/>
        <end position="374"/>
    </location>
</feature>
<feature type="active site" evidence="2">
    <location>
        <position position="239"/>
    </location>
</feature>
<feature type="binding site" evidence="1">
    <location>
        <position position="150"/>
    </location>
    <ligand>
        <name>Ca(2+)</name>
        <dbReference type="ChEBI" id="CHEBI:29108"/>
    </ligand>
</feature>
<feature type="binding site" evidence="1">
    <location>
        <position position="152"/>
    </location>
    <ligand>
        <name>Ca(2+)</name>
        <dbReference type="ChEBI" id="CHEBI:29108"/>
    </ligand>
</feature>
<feature type="binding site" evidence="1">
    <location>
        <position position="187"/>
    </location>
    <ligand>
        <name>Ca(2+)</name>
        <dbReference type="ChEBI" id="CHEBI:29108"/>
    </ligand>
</feature>
<feature type="binding site" evidence="1">
    <location>
        <position position="191"/>
    </location>
    <ligand>
        <name>Ca(2+)</name>
        <dbReference type="ChEBI" id="CHEBI:29108"/>
    </ligand>
</feature>
<feature type="disulfide bond" evidence="1">
    <location>
        <begin position="93"/>
        <end position="176"/>
    </location>
</feature>
<feature type="disulfide bond" evidence="1">
    <location>
        <begin position="350"/>
        <end position="373"/>
    </location>
</feature>
<gene>
    <name type="primary">pel2</name>
    <name type="synonym">pelB</name>
</gene>
<proteinExistence type="inferred from homology"/>
<name>PLY2_PECCA</name>
<organism>
    <name type="scientific">Pectobacterium carotovorum</name>
    <name type="common">Erwinia carotovora</name>
    <dbReference type="NCBI Taxonomy" id="554"/>
    <lineage>
        <taxon>Bacteria</taxon>
        <taxon>Pseudomonadati</taxon>
        <taxon>Pseudomonadota</taxon>
        <taxon>Gammaproteobacteria</taxon>
        <taxon>Enterobacterales</taxon>
        <taxon>Pectobacteriaceae</taxon>
        <taxon>Pectobacterium</taxon>
    </lineage>
</organism>
<protein>
    <recommendedName>
        <fullName>Pectate lyase 2</fullName>
        <ecNumber>4.2.2.2</ecNumber>
    </recommendedName>
    <alternativeName>
        <fullName>Pectate lyase B</fullName>
        <shortName>PLB</shortName>
    </alternativeName>
    <alternativeName>
        <fullName>Pectate lyase II</fullName>
        <shortName>PEL II</shortName>
    </alternativeName>
</protein>
<evidence type="ECO:0000250" key="1"/>
<evidence type="ECO:0000255" key="2"/>
<evidence type="ECO:0000305" key="3"/>
<sequence length="374" mass="40380">MKYLLPTAAAGLLLLAAQPAMAANTGGYATTDGGEVSGAVKKTARSMKEIVDIIEAAQVDSKGKKVKGGAYPLIITYSGNEDSLIKAAEKNICGQWSKDARGVQIKEFTKGITIQGTNGSSANFGVWIVNSSNVVVRNMRFGYMPGGAQDGDAIRIDNSPNVWIDHNEIFAKNFECKGTPDNDTTFESAVDIKKGSTNVTVSYNYIHGIKKVGLSGASNTDTGRNLTYHHNIYRDVNSRLPLQRGGLVHAYNNLYDGITGSGFNVRQKGIALIESNWFENALNPVTARNDSSNFGTWELRNNNITSPSDFAKYKITWGKPSSPHINADNWKSTGKFPSISYKYTPVSAQCVKDKLANYAGVGKNLAVLTAANCK</sequence>
<keyword id="KW-0106">Calcium</keyword>
<keyword id="KW-1015">Disulfide bond</keyword>
<keyword id="KW-0456">Lyase</keyword>
<keyword id="KW-0479">Metal-binding</keyword>
<keyword id="KW-0964">Secreted</keyword>
<keyword id="KW-0732">Signal</keyword>
<accession>P0C1C1</accession>
<accession>P11431</accession>
<accession>Q06112</accession>
<accession>Q47469</accession>
<reference key="1">
    <citation type="journal article" date="1992" name="Biosci. Biotechnol. Biochem.">
        <title>Molecular cloning and sequencing of the extracellular pectate lyase II gene from Erwinia carotovora Er.</title>
        <authorList>
            <person name="Yoshida A."/>
            <person name="Matsuo Y."/>
            <person name="Kamio Y."/>
            <person name="Izaki K."/>
        </authorList>
    </citation>
    <scope>NUCLEOTIDE SEQUENCE [GENOMIC DNA]</scope>
    <source>
        <strain>Er</strain>
    </source>
</reference>
<comment type="function">
    <text>Involved in maceration and soft-rotting of plant tissue.</text>
</comment>
<comment type="catalytic activity">
    <reaction>
        <text>Eliminative cleavage of (1-&gt;4)-alpha-D-galacturonan to give oligosaccharides with 4-deoxy-alpha-D-galact-4-enuronosyl groups at their non-reducing ends.</text>
        <dbReference type="EC" id="4.2.2.2"/>
    </reaction>
</comment>
<comment type="cofactor">
    <cofactor evidence="1">
        <name>Ca(2+)</name>
        <dbReference type="ChEBI" id="CHEBI:29108"/>
    </cofactor>
    <text evidence="1">Binds 1 Ca(2+) ion per subunit.</text>
</comment>
<comment type="pathway">
    <text>Glycan metabolism; pectin degradation; 2-dehydro-3-deoxy-D-gluconate from pectin: step 2/5.</text>
</comment>
<comment type="subcellular location">
    <subcellularLocation>
        <location>Secreted</location>
    </subcellularLocation>
</comment>
<comment type="similarity">
    <text evidence="3">Belongs to the polysaccharide lyase 1 family. PLADES subfamily.</text>
</comment>